<evidence type="ECO:0000269" key="1">
    <source>
    </source>
</evidence>
<evidence type="ECO:0000305" key="2"/>
<evidence type="ECO:0007829" key="3">
    <source>
        <dbReference type="PDB" id="4UTU"/>
    </source>
</evidence>
<gene>
    <name type="primary">nanE</name>
    <name type="synonym">nanP</name>
    <name type="ordered locus">CPE0184</name>
</gene>
<reference key="1">
    <citation type="journal article" date="1999" name="J. Bacteriol.">
        <title>Cloning, sequence, and transcriptional regulation of the operon encoding a putative N-acetylmannosamine-6-phosphate epimerase (nanE) and sialic acid lyase (nanA) in Clostridium perfringens.</title>
        <authorList>
            <person name="Walters D.M."/>
            <person name="Stirewalt V.L."/>
            <person name="Melville S.B."/>
        </authorList>
    </citation>
    <scope>NUCLEOTIDE SEQUENCE [GENOMIC DNA]</scope>
    <scope>TRANSCRIPTIONAL REGULATION</scope>
    <source>
        <strain>NCTC 8798 / Type A</strain>
    </source>
</reference>
<reference key="2">
    <citation type="journal article" date="2002" name="Proc. Natl. Acad. Sci. U.S.A.">
        <title>Complete genome sequence of Clostridium perfringens, an anaerobic flesh-eater.</title>
        <authorList>
            <person name="Shimizu T."/>
            <person name="Ohtani K."/>
            <person name="Hirakawa H."/>
            <person name="Ohshima K."/>
            <person name="Yamashita A."/>
            <person name="Shiba T."/>
            <person name="Ogasawara N."/>
            <person name="Hattori M."/>
            <person name="Kuhara S."/>
            <person name="Hayashi H."/>
        </authorList>
    </citation>
    <scope>NUCLEOTIDE SEQUENCE [LARGE SCALE GENOMIC DNA]</scope>
    <source>
        <strain>13 / Type A</strain>
    </source>
</reference>
<reference key="3">
    <citation type="journal article" date="1997" name="Glycoconj. J.">
        <title>Cloning, sequencing and expression of the acetylneuraminate lyase gene from Clostridium perfringens A99.</title>
        <authorList>
            <person name="Traving C."/>
            <person name="Roggentin P."/>
            <person name="Schauer R."/>
        </authorList>
    </citation>
    <scope>NUCLEOTIDE SEQUENCE [GENOMIC DNA] OF 161-221</scope>
    <source>
        <strain>A99</strain>
    </source>
</reference>
<dbReference type="EC" id="5.1.3.9"/>
<dbReference type="EMBL" id="AF130859">
    <property type="protein sequence ID" value="AAD28762.1"/>
    <property type="molecule type" value="Genomic_DNA"/>
</dbReference>
<dbReference type="EMBL" id="BA000016">
    <property type="protein sequence ID" value="BAB79890.1"/>
    <property type="molecule type" value="Genomic_DNA"/>
</dbReference>
<dbReference type="EMBL" id="Y12876">
    <property type="protein sequence ID" value="CAA73374.1"/>
    <property type="molecule type" value="Genomic_DNA"/>
</dbReference>
<dbReference type="RefSeq" id="WP_003452659.1">
    <property type="nucleotide sequence ID" value="NC_003366.1"/>
</dbReference>
<dbReference type="PDB" id="4UTU">
    <property type="method" value="X-ray"/>
    <property type="resolution" value="1.45 A"/>
    <property type="chains" value="A/B=1-220"/>
</dbReference>
<dbReference type="PDB" id="4UTW">
    <property type="method" value="X-ray"/>
    <property type="resolution" value="1.90 A"/>
    <property type="chains" value="A/B/C/D=1-220"/>
</dbReference>
<dbReference type="PDBsum" id="4UTU"/>
<dbReference type="PDBsum" id="4UTW"/>
<dbReference type="SMR" id="Q8XNZ3"/>
<dbReference type="STRING" id="195102.gene:10489428"/>
<dbReference type="KEGG" id="cpe:CPE0184"/>
<dbReference type="HOGENOM" id="CLU_086300_1_0_9"/>
<dbReference type="BioCyc" id="MetaCyc:MONOMER-18988"/>
<dbReference type="UniPathway" id="UPA00629">
    <property type="reaction ID" value="UER00682"/>
</dbReference>
<dbReference type="EvolutionaryTrace" id="Q8XNZ3"/>
<dbReference type="Proteomes" id="UP000000818">
    <property type="component" value="Chromosome"/>
</dbReference>
<dbReference type="GO" id="GO:0005829">
    <property type="term" value="C:cytosol"/>
    <property type="evidence" value="ECO:0007669"/>
    <property type="project" value="TreeGrafter"/>
</dbReference>
<dbReference type="GO" id="GO:0047465">
    <property type="term" value="F:N-acylglucosamine-6-phosphate 2-epimerase activity"/>
    <property type="evidence" value="ECO:0007669"/>
    <property type="project" value="UniProtKB-EC"/>
</dbReference>
<dbReference type="GO" id="GO:0005975">
    <property type="term" value="P:carbohydrate metabolic process"/>
    <property type="evidence" value="ECO:0007669"/>
    <property type="project" value="UniProtKB-UniRule"/>
</dbReference>
<dbReference type="GO" id="GO:0006053">
    <property type="term" value="P:N-acetylmannosamine catabolic process"/>
    <property type="evidence" value="ECO:0007669"/>
    <property type="project" value="TreeGrafter"/>
</dbReference>
<dbReference type="GO" id="GO:0019262">
    <property type="term" value="P:N-acetylneuraminate catabolic process"/>
    <property type="evidence" value="ECO:0007669"/>
    <property type="project" value="UniProtKB-UniRule"/>
</dbReference>
<dbReference type="CDD" id="cd04729">
    <property type="entry name" value="NanE"/>
    <property type="match status" value="1"/>
</dbReference>
<dbReference type="FunFam" id="3.20.20.70:FF:000035">
    <property type="entry name" value="Putative N-acetylmannosamine-6-phosphate 2-epimerase"/>
    <property type="match status" value="1"/>
</dbReference>
<dbReference type="Gene3D" id="3.20.20.70">
    <property type="entry name" value="Aldolase class I"/>
    <property type="match status" value="1"/>
</dbReference>
<dbReference type="HAMAP" id="MF_01235">
    <property type="entry name" value="ManNAc6P_epimer"/>
    <property type="match status" value="1"/>
</dbReference>
<dbReference type="InterPro" id="IPR013785">
    <property type="entry name" value="Aldolase_TIM"/>
</dbReference>
<dbReference type="InterPro" id="IPR007260">
    <property type="entry name" value="NanE"/>
</dbReference>
<dbReference type="InterPro" id="IPR011060">
    <property type="entry name" value="RibuloseP-bd_barrel"/>
</dbReference>
<dbReference type="NCBIfam" id="NF002231">
    <property type="entry name" value="PRK01130.1"/>
    <property type="match status" value="1"/>
</dbReference>
<dbReference type="PANTHER" id="PTHR36204">
    <property type="entry name" value="N-ACETYLMANNOSAMINE-6-PHOSPHATE 2-EPIMERASE-RELATED"/>
    <property type="match status" value="1"/>
</dbReference>
<dbReference type="PANTHER" id="PTHR36204:SF1">
    <property type="entry name" value="N-ACETYLMANNOSAMINE-6-PHOSPHATE 2-EPIMERASE-RELATED"/>
    <property type="match status" value="1"/>
</dbReference>
<dbReference type="Pfam" id="PF04131">
    <property type="entry name" value="NanE"/>
    <property type="match status" value="1"/>
</dbReference>
<dbReference type="SUPFAM" id="SSF51366">
    <property type="entry name" value="Ribulose-phoshate binding barrel"/>
    <property type="match status" value="1"/>
</dbReference>
<proteinExistence type="evidence at protein level"/>
<accession>Q8XNZ3</accession>
<accession>O05726</accession>
<accession>Q9S4L0</accession>
<keyword id="KW-0002">3D-structure</keyword>
<keyword id="KW-0119">Carbohydrate metabolism</keyword>
<keyword id="KW-0413">Isomerase</keyword>
<keyword id="KW-1185">Reference proteome</keyword>
<name>NANE_CLOPE</name>
<feature type="chain" id="PRO_0000179768" description="Putative N-acetylmannosamine-6-phosphate 2-epimerase">
    <location>
        <begin position="1"/>
        <end position="221"/>
    </location>
</feature>
<feature type="sequence variant" description="In strain: NCTC 8798.">
    <original>VN</original>
    <variation>ID</variation>
    <location>
        <begin position="47"/>
        <end position="48"/>
    </location>
</feature>
<feature type="sequence variant" description="In strain: NCTC 8798.">
    <original>A</original>
    <variation>G</variation>
    <location>
        <position position="95"/>
    </location>
</feature>
<feature type="sequence variant" description="In strain: NCTC 8798.">
    <original>V</original>
    <variation>I</variation>
    <location>
        <position position="109"/>
    </location>
</feature>
<feature type="helix" evidence="3">
    <location>
        <begin position="1"/>
        <end position="5"/>
    </location>
</feature>
<feature type="strand" evidence="3">
    <location>
        <begin position="8"/>
        <end position="12"/>
    </location>
</feature>
<feature type="helix" evidence="3">
    <location>
        <begin position="24"/>
        <end position="36"/>
    </location>
</feature>
<feature type="strand" evidence="3">
    <location>
        <begin position="40"/>
        <end position="46"/>
    </location>
</feature>
<feature type="helix" evidence="3">
    <location>
        <begin position="47"/>
        <end position="57"/>
    </location>
</feature>
<feature type="strand" evidence="3">
    <location>
        <begin position="61"/>
        <end position="64"/>
    </location>
</feature>
<feature type="helix" evidence="3">
    <location>
        <begin position="80"/>
        <end position="87"/>
    </location>
</feature>
<feature type="strand" evidence="3">
    <location>
        <begin position="92"/>
        <end position="97"/>
    </location>
</feature>
<feature type="strand" evidence="3">
    <location>
        <begin position="99"/>
        <end position="101"/>
    </location>
</feature>
<feature type="helix" evidence="3">
    <location>
        <begin position="104"/>
        <end position="106"/>
    </location>
</feature>
<feature type="helix" evidence="3">
    <location>
        <begin position="109"/>
        <end position="118"/>
    </location>
</feature>
<feature type="strand" evidence="3">
    <location>
        <begin position="122"/>
        <end position="126"/>
    </location>
</feature>
<feature type="helix" evidence="3">
    <location>
        <begin position="130"/>
        <end position="138"/>
    </location>
</feature>
<feature type="strand" evidence="3">
    <location>
        <begin position="142"/>
        <end position="145"/>
    </location>
</feature>
<feature type="turn" evidence="3">
    <location>
        <begin position="147"/>
        <end position="150"/>
    </location>
</feature>
<feature type="helix" evidence="3">
    <location>
        <begin position="163"/>
        <end position="172"/>
    </location>
</feature>
<feature type="strand" evidence="3">
    <location>
        <begin position="177"/>
        <end position="181"/>
    </location>
</feature>
<feature type="helix" evidence="3">
    <location>
        <begin position="186"/>
        <end position="194"/>
    </location>
</feature>
<feature type="strand" evidence="3">
    <location>
        <begin position="198"/>
        <end position="202"/>
    </location>
</feature>
<feature type="helix" evidence="3">
    <location>
        <begin position="204"/>
        <end position="207"/>
    </location>
</feature>
<feature type="helix" evidence="3">
    <location>
        <begin position="209"/>
        <end position="217"/>
    </location>
</feature>
<sequence length="221" mass="24153">MLDVVKGNLIVSCQALSDEPLHSSFIMGRMAIAAKQGGAAAIRAQGVNDINEIKEVTKLPIIGIIKRNYDDSEIYITPTMKEVDELLKTDCEMIALDATKRKRPNGENVKDLVDAIHAKGRLAMADISTLEEGIEAEKLGFDCVSTTLSGYTPYSKQSNSVDFELLEELVKTVKIPVICEGRINTPEELKKALDLGAYSAVVGGAITRPQQITKRFTDILK</sequence>
<protein>
    <recommendedName>
        <fullName>Putative N-acetylmannosamine-6-phosphate 2-epimerase</fullName>
        <ecNumber>5.1.3.9</ecNumber>
    </recommendedName>
    <alternativeName>
        <fullName>ManNAc-6-P epimerase</fullName>
    </alternativeName>
</protein>
<organism>
    <name type="scientific">Clostridium perfringens (strain 13 / Type A)</name>
    <dbReference type="NCBI Taxonomy" id="195102"/>
    <lineage>
        <taxon>Bacteria</taxon>
        <taxon>Bacillati</taxon>
        <taxon>Bacillota</taxon>
        <taxon>Clostridia</taxon>
        <taxon>Eubacteriales</taxon>
        <taxon>Clostridiaceae</taxon>
        <taxon>Clostridium</taxon>
    </lineage>
</organism>
<comment type="function">
    <text evidence="2">Converts N-acetylmannosamine-6-phosphate (ManNAc-6-P) to N-acetylglucosamine-6-phosphate (GlcNAc-6-P).</text>
</comment>
<comment type="catalytic activity">
    <reaction>
        <text>an N-acyl-D-glucosamine 6-phosphate = an N-acyl-D-mannosamine 6-phosphate</text>
        <dbReference type="Rhea" id="RHEA:23932"/>
        <dbReference type="ChEBI" id="CHEBI:57599"/>
        <dbReference type="ChEBI" id="CHEBI:57666"/>
        <dbReference type="EC" id="5.1.3.9"/>
    </reaction>
</comment>
<comment type="pathway">
    <text>Amino-sugar metabolism; N-acetylneuraminate degradation; D-fructose 6-phosphate from N-acetylneuraminate: step 3/5.</text>
</comment>
<comment type="induction">
    <text evidence="1">By N-acetylneuraminate.</text>
</comment>
<comment type="similarity">
    <text evidence="2">Belongs to the NanE family.</text>
</comment>